<protein>
    <recommendedName>
        <fullName evidence="1">ATP synthase subunit beta</fullName>
        <ecNumber evidence="1">7.1.2.2</ecNumber>
    </recommendedName>
    <alternativeName>
        <fullName evidence="1">ATP synthase F1 sector subunit beta</fullName>
    </alternativeName>
    <alternativeName>
        <fullName evidence="1">F-ATPase subunit beta</fullName>
    </alternativeName>
</protein>
<keyword id="KW-0066">ATP synthesis</keyword>
<keyword id="KW-0067">ATP-binding</keyword>
<keyword id="KW-1003">Cell membrane</keyword>
<keyword id="KW-0139">CF(1)</keyword>
<keyword id="KW-0375">Hydrogen ion transport</keyword>
<keyword id="KW-0406">Ion transport</keyword>
<keyword id="KW-0472">Membrane</keyword>
<keyword id="KW-0547">Nucleotide-binding</keyword>
<keyword id="KW-1185">Reference proteome</keyword>
<keyword id="KW-1278">Translocase</keyword>
<keyword id="KW-0813">Transport</keyword>
<reference key="1">
    <citation type="journal article" date="2004" name="Genome Res.">
        <title>The complete genome and proteome of Mycoplasma mobile.</title>
        <authorList>
            <person name="Jaffe J.D."/>
            <person name="Stange-Thomann N."/>
            <person name="Smith C."/>
            <person name="DeCaprio D."/>
            <person name="Fisher S."/>
            <person name="Butler J."/>
            <person name="Calvo S."/>
            <person name="Elkins T."/>
            <person name="FitzGerald M.G."/>
            <person name="Hafez N."/>
            <person name="Kodira C.D."/>
            <person name="Major J."/>
            <person name="Wang S."/>
            <person name="Wilkinson J."/>
            <person name="Nicol R."/>
            <person name="Nusbaum C."/>
            <person name="Birren B."/>
            <person name="Berg H.C."/>
            <person name="Church G.M."/>
        </authorList>
    </citation>
    <scope>NUCLEOTIDE SEQUENCE [LARGE SCALE GENOMIC DNA]</scope>
    <source>
        <strain>ATCC 43663 / NCTC 11711 / 163 K</strain>
    </source>
</reference>
<feature type="chain" id="PRO_0000254305" description="ATP synthase subunit beta">
    <location>
        <begin position="1"/>
        <end position="470"/>
    </location>
</feature>
<feature type="binding site" evidence="1">
    <location>
        <begin position="151"/>
        <end position="158"/>
    </location>
    <ligand>
        <name>ATP</name>
        <dbReference type="ChEBI" id="CHEBI:30616"/>
    </ligand>
</feature>
<evidence type="ECO:0000255" key="1">
    <source>
        <dbReference type="HAMAP-Rule" id="MF_01347"/>
    </source>
</evidence>
<sequence>MKNKGKIIQILGPIVDVKFNENQLPKLLNALTIEFEKTKITLEVAQHIGNDVVRTIAMSSTEGLVRNLEVIDTEAPISVPVGKNVLSHMFNVIGENIDNQSIDPNTEKWSIHRKAPSYEEQTATSEILETGIKVIDLLVPYVKGGKIGLFGGAGVGKTVLVQELINNIAVHHGGLSVFAGVGERTREGNDLYYEMKASGVLDKTALVFGQMNEPPGARMRVALSGLTMAEYFRDELNQDVLLFIDNIFRFTQAGSEVSALLGRMPSAVGYQPTLATEMGQLQERITSTRKGSITSIQAVYVPADDLTDPAPATTFIHLDAQTVLDRNIASLGIYPAIDPLASASRMLSADIVGEEHYKIAREVQRILQKFKELQDIIAILGMDELSDEDKNIVYRARKIRNFLSQPFHVAEKFSGIKGTFVKLSDTLRSFRDILDGKYDDLDESAFLYVGTIEEAKQKHLKNYKGDHVEK</sequence>
<comment type="function">
    <text evidence="1">Produces ATP from ADP in the presence of a proton gradient across the membrane. The catalytic sites are hosted primarily by the beta subunits.</text>
</comment>
<comment type="catalytic activity">
    <reaction evidence="1">
        <text>ATP + H2O + 4 H(+)(in) = ADP + phosphate + 5 H(+)(out)</text>
        <dbReference type="Rhea" id="RHEA:57720"/>
        <dbReference type="ChEBI" id="CHEBI:15377"/>
        <dbReference type="ChEBI" id="CHEBI:15378"/>
        <dbReference type="ChEBI" id="CHEBI:30616"/>
        <dbReference type="ChEBI" id="CHEBI:43474"/>
        <dbReference type="ChEBI" id="CHEBI:456216"/>
        <dbReference type="EC" id="7.1.2.2"/>
    </reaction>
</comment>
<comment type="subunit">
    <text evidence="1">F-type ATPases have 2 components, CF(1) - the catalytic core - and CF(0) - the membrane proton channel. CF(1) has five subunits: alpha(3), beta(3), gamma(1), delta(1), epsilon(1). CF(0) has three main subunits: a(1), b(2) and c(9-12). The alpha and beta chains form an alternating ring which encloses part of the gamma chain. CF(1) is attached to CF(0) by a central stalk formed by the gamma and epsilon chains, while a peripheral stalk is formed by the delta and b chains.</text>
</comment>
<comment type="subcellular location">
    <subcellularLocation>
        <location evidence="1">Cell membrane</location>
        <topology evidence="1">Peripheral membrane protein</topology>
    </subcellularLocation>
</comment>
<comment type="similarity">
    <text evidence="1">Belongs to the ATPase alpha/beta chains family.</text>
</comment>
<name>ATPB_MYCM1</name>
<proteinExistence type="inferred from homology"/>
<dbReference type="EC" id="7.1.2.2" evidence="1"/>
<dbReference type="EMBL" id="AE017308">
    <property type="protein sequence ID" value="AAT27694.1"/>
    <property type="molecule type" value="Genomic_DNA"/>
</dbReference>
<dbReference type="RefSeq" id="WP_011264728.1">
    <property type="nucleotide sequence ID" value="NC_006908.1"/>
</dbReference>
<dbReference type="SMR" id="Q6KI82"/>
<dbReference type="STRING" id="267748.MMOB2080"/>
<dbReference type="KEGG" id="mmo:MMOB2080"/>
<dbReference type="eggNOG" id="COG0055">
    <property type="taxonomic scope" value="Bacteria"/>
</dbReference>
<dbReference type="HOGENOM" id="CLU_022398_0_2_14"/>
<dbReference type="OrthoDB" id="9801639at2"/>
<dbReference type="Proteomes" id="UP000009072">
    <property type="component" value="Chromosome"/>
</dbReference>
<dbReference type="GO" id="GO:0005886">
    <property type="term" value="C:plasma membrane"/>
    <property type="evidence" value="ECO:0007669"/>
    <property type="project" value="UniProtKB-SubCell"/>
</dbReference>
<dbReference type="GO" id="GO:0045259">
    <property type="term" value="C:proton-transporting ATP synthase complex"/>
    <property type="evidence" value="ECO:0007669"/>
    <property type="project" value="UniProtKB-KW"/>
</dbReference>
<dbReference type="GO" id="GO:0005524">
    <property type="term" value="F:ATP binding"/>
    <property type="evidence" value="ECO:0007669"/>
    <property type="project" value="UniProtKB-UniRule"/>
</dbReference>
<dbReference type="GO" id="GO:0016887">
    <property type="term" value="F:ATP hydrolysis activity"/>
    <property type="evidence" value="ECO:0007669"/>
    <property type="project" value="InterPro"/>
</dbReference>
<dbReference type="GO" id="GO:0046933">
    <property type="term" value="F:proton-transporting ATP synthase activity, rotational mechanism"/>
    <property type="evidence" value="ECO:0007669"/>
    <property type="project" value="UniProtKB-UniRule"/>
</dbReference>
<dbReference type="CDD" id="cd18110">
    <property type="entry name" value="ATP-synt_F1_beta_C"/>
    <property type="match status" value="1"/>
</dbReference>
<dbReference type="CDD" id="cd18115">
    <property type="entry name" value="ATP-synt_F1_beta_N"/>
    <property type="match status" value="1"/>
</dbReference>
<dbReference type="CDD" id="cd01133">
    <property type="entry name" value="F1-ATPase_beta_CD"/>
    <property type="match status" value="1"/>
</dbReference>
<dbReference type="FunFam" id="1.10.1140.10:FF:000001">
    <property type="entry name" value="ATP synthase subunit beta"/>
    <property type="match status" value="1"/>
</dbReference>
<dbReference type="FunFam" id="2.40.10.170:FF:000005">
    <property type="entry name" value="ATP synthase subunit beta"/>
    <property type="match status" value="1"/>
</dbReference>
<dbReference type="FunFam" id="3.40.50.300:FF:000004">
    <property type="entry name" value="ATP synthase subunit beta"/>
    <property type="match status" value="1"/>
</dbReference>
<dbReference type="Gene3D" id="2.40.10.170">
    <property type="match status" value="1"/>
</dbReference>
<dbReference type="Gene3D" id="1.10.1140.10">
    <property type="entry name" value="Bovine Mitochondrial F1-atpase, Atp Synthase Beta Chain, Chain D, domain 3"/>
    <property type="match status" value="1"/>
</dbReference>
<dbReference type="Gene3D" id="3.40.50.300">
    <property type="entry name" value="P-loop containing nucleotide triphosphate hydrolases"/>
    <property type="match status" value="1"/>
</dbReference>
<dbReference type="HAMAP" id="MF_01347">
    <property type="entry name" value="ATP_synth_beta_bact"/>
    <property type="match status" value="1"/>
</dbReference>
<dbReference type="InterPro" id="IPR003593">
    <property type="entry name" value="AAA+_ATPase"/>
</dbReference>
<dbReference type="InterPro" id="IPR055190">
    <property type="entry name" value="ATP-synt_VA_C"/>
</dbReference>
<dbReference type="InterPro" id="IPR005722">
    <property type="entry name" value="ATP_synth_F1_bsu"/>
</dbReference>
<dbReference type="InterPro" id="IPR020003">
    <property type="entry name" value="ATPase_a/bsu_AS"/>
</dbReference>
<dbReference type="InterPro" id="IPR050053">
    <property type="entry name" value="ATPase_alpha/beta_chains"/>
</dbReference>
<dbReference type="InterPro" id="IPR004100">
    <property type="entry name" value="ATPase_F1/V1/A1_a/bsu_N"/>
</dbReference>
<dbReference type="InterPro" id="IPR036121">
    <property type="entry name" value="ATPase_F1/V1/A1_a/bsu_N_sf"/>
</dbReference>
<dbReference type="InterPro" id="IPR000194">
    <property type="entry name" value="ATPase_F1/V1/A1_a/bsu_nucl-bd"/>
</dbReference>
<dbReference type="InterPro" id="IPR024034">
    <property type="entry name" value="ATPase_F1/V1_b/a_C"/>
</dbReference>
<dbReference type="InterPro" id="IPR027417">
    <property type="entry name" value="P-loop_NTPase"/>
</dbReference>
<dbReference type="NCBIfam" id="TIGR01039">
    <property type="entry name" value="atpD"/>
    <property type="match status" value="1"/>
</dbReference>
<dbReference type="PANTHER" id="PTHR15184">
    <property type="entry name" value="ATP SYNTHASE"/>
    <property type="match status" value="1"/>
</dbReference>
<dbReference type="PANTHER" id="PTHR15184:SF71">
    <property type="entry name" value="ATP SYNTHASE SUBUNIT BETA, MITOCHONDRIAL"/>
    <property type="match status" value="1"/>
</dbReference>
<dbReference type="Pfam" id="PF00006">
    <property type="entry name" value="ATP-synt_ab"/>
    <property type="match status" value="1"/>
</dbReference>
<dbReference type="Pfam" id="PF02874">
    <property type="entry name" value="ATP-synt_ab_N"/>
    <property type="match status" value="1"/>
</dbReference>
<dbReference type="Pfam" id="PF22919">
    <property type="entry name" value="ATP-synt_VA_C"/>
    <property type="match status" value="1"/>
</dbReference>
<dbReference type="SMART" id="SM00382">
    <property type="entry name" value="AAA"/>
    <property type="match status" value="1"/>
</dbReference>
<dbReference type="SUPFAM" id="SSF47917">
    <property type="entry name" value="C-terminal domain of alpha and beta subunits of F1 ATP synthase"/>
    <property type="match status" value="1"/>
</dbReference>
<dbReference type="SUPFAM" id="SSF50615">
    <property type="entry name" value="N-terminal domain of alpha and beta subunits of F1 ATP synthase"/>
    <property type="match status" value="1"/>
</dbReference>
<dbReference type="SUPFAM" id="SSF52540">
    <property type="entry name" value="P-loop containing nucleoside triphosphate hydrolases"/>
    <property type="match status" value="1"/>
</dbReference>
<dbReference type="PROSITE" id="PS00152">
    <property type="entry name" value="ATPASE_ALPHA_BETA"/>
    <property type="match status" value="1"/>
</dbReference>
<gene>
    <name evidence="1" type="primary">atpD</name>
    <name type="ordered locus">MMOB2080</name>
</gene>
<accession>Q6KI82</accession>
<organism>
    <name type="scientific">Mycoplasma mobile (strain ATCC 43663 / 163K / NCTC 11711)</name>
    <name type="common">Mesomycoplasma mobile</name>
    <dbReference type="NCBI Taxonomy" id="267748"/>
    <lineage>
        <taxon>Bacteria</taxon>
        <taxon>Bacillati</taxon>
        <taxon>Mycoplasmatota</taxon>
        <taxon>Mycoplasmoidales</taxon>
        <taxon>Metamycoplasmataceae</taxon>
        <taxon>Mesomycoplasma</taxon>
    </lineage>
</organism>